<accession>Q8AVN9</accession>
<accession>O42147</accession>
<sequence length="524" mass="55546">MADEFGNGDALDLPVGKDAVNSLIRENSHIFSDTQCKVCSAVLISESQKLAHYQSRKHANKVRRYMAINQGEDSVPAKKFKAAPAEISDGEDRSKCCPVCNMTFSSPVVAESHYIGKTHIKNLRLREQGGVKEGMVNQAKKTRTPTVATKSDNKMDHSDRAKFCKLCHSTFNNPLMAEQHYAGKKHKKQETKTQIMTIYTSSGQTPAQAPIPLNLNSPMPGSGSAGKGFSCDKCNIVLNSIEQYQAHVSGAKHKNQLMSMTPLSEEGHQAVVAPSAIASGSAGKGFSCDTCNIVLNSIEQYQAHISGAKHKNHLKSMTPLSEEGHTAAVAPSAFASGSAGKGFSCDTCNIVLNSIEQYQAHISGAKHKNHLMSMTPLSEEGHTAAVAPSAFASGSAGKGFSCDTCNIVLNSIEQYQAHVSGAKHKNQLMSMTPSSEEGLPSAVGPSAFASPLSAGGALSSGGPSGRGFCPSGDLTPKGPSSFGSLPPLGSLLPPLYPPAHSSQPYVHDDTMSPDGYNYFNEDFE</sequence>
<protein>
    <recommendedName>
        <fullName evidence="1">Zinc finger protein 346</fullName>
    </recommendedName>
    <alternativeName>
        <fullName>Double-stranded RNA-binding protein ZFa</fullName>
        <shortName evidence="8">DsRBP-ZFa</shortName>
        <shortName evidence="6">ZFa</shortName>
    </alternativeName>
    <alternativeName>
        <fullName evidence="1">Just another zinc finger protein</fullName>
        <shortName>Protein jaz</shortName>
    </alternativeName>
</protein>
<organism>
    <name type="scientific">Xenopus laevis</name>
    <name type="common">African clawed frog</name>
    <dbReference type="NCBI Taxonomy" id="8355"/>
    <lineage>
        <taxon>Eukaryota</taxon>
        <taxon>Metazoa</taxon>
        <taxon>Chordata</taxon>
        <taxon>Craniata</taxon>
        <taxon>Vertebrata</taxon>
        <taxon>Euteleostomi</taxon>
        <taxon>Amphibia</taxon>
        <taxon>Batrachia</taxon>
        <taxon>Anura</taxon>
        <taxon>Pipoidea</taxon>
        <taxon>Pipidae</taxon>
        <taxon>Xenopodinae</taxon>
        <taxon>Xenopus</taxon>
        <taxon>Xenopus</taxon>
    </lineage>
</organism>
<proteinExistence type="evidence at protein level"/>
<feature type="chain" id="PRO_0000348934" description="Zinc finger protein 346">
    <location>
        <begin position="1"/>
        <end position="524"/>
    </location>
</feature>
<feature type="zinc finger region" description="Matrin-type 1" evidence="2">
    <location>
        <begin position="34"/>
        <end position="64"/>
    </location>
</feature>
<feature type="zinc finger region" description="Matrin-type 2" evidence="2">
    <location>
        <begin position="92"/>
        <end position="126"/>
    </location>
</feature>
<feature type="zinc finger region" description="Matrin-type 3" evidence="2">
    <location>
        <begin position="162"/>
        <end position="192"/>
    </location>
</feature>
<feature type="zinc finger region" description="Matrin-type 4" evidence="2">
    <location>
        <begin position="226"/>
        <end position="260"/>
    </location>
</feature>
<feature type="zinc finger region" description="Matrin-type 5" evidence="2">
    <location>
        <begin position="286"/>
        <end position="316"/>
    </location>
</feature>
<feature type="zinc finger region" description="Matrin-type 6" evidence="2">
    <location>
        <begin position="343"/>
        <end position="373"/>
    </location>
</feature>
<feature type="zinc finger region" description="Matrin-type 7" evidence="2">
    <location>
        <begin position="400"/>
        <end position="430"/>
    </location>
</feature>
<feature type="region of interest" description="Disordered" evidence="3">
    <location>
        <begin position="453"/>
        <end position="486"/>
    </location>
</feature>
<feature type="region of interest" description="Disordered" evidence="3">
    <location>
        <begin position="494"/>
        <end position="513"/>
    </location>
</feature>
<feature type="compositionally biased region" description="Low complexity" evidence="3">
    <location>
        <begin position="476"/>
        <end position="486"/>
    </location>
</feature>
<feature type="binding site" evidence="4">
    <location>
        <position position="36"/>
    </location>
    <ligand>
        <name>Zn(2+)</name>
        <dbReference type="ChEBI" id="CHEBI:29105"/>
        <label>1</label>
    </ligand>
</feature>
<feature type="binding site" evidence="4">
    <location>
        <position position="39"/>
    </location>
    <ligand>
        <name>Zn(2+)</name>
        <dbReference type="ChEBI" id="CHEBI:29105"/>
        <label>1</label>
    </ligand>
</feature>
<feature type="binding site" evidence="4">
    <location>
        <position position="52"/>
    </location>
    <ligand>
        <name>Zn(2+)</name>
        <dbReference type="ChEBI" id="CHEBI:29105"/>
        <label>1</label>
    </ligand>
</feature>
<feature type="binding site" evidence="4">
    <location>
        <position position="58"/>
    </location>
    <ligand>
        <name>Zn(2+)</name>
        <dbReference type="ChEBI" id="CHEBI:29105"/>
        <label>1</label>
    </ligand>
</feature>
<feature type="binding site" evidence="4">
    <location>
        <position position="97"/>
    </location>
    <ligand>
        <name>Zn(2+)</name>
        <dbReference type="ChEBI" id="CHEBI:29105"/>
        <label>2</label>
    </ligand>
</feature>
<feature type="binding site" evidence="4">
    <location>
        <position position="100"/>
    </location>
    <ligand>
        <name>Zn(2+)</name>
        <dbReference type="ChEBI" id="CHEBI:29105"/>
        <label>2</label>
    </ligand>
</feature>
<feature type="binding site" evidence="4">
    <location>
        <position position="113"/>
    </location>
    <ligand>
        <name>Zn(2+)</name>
        <dbReference type="ChEBI" id="CHEBI:29105"/>
        <label>2</label>
    </ligand>
</feature>
<feature type="binding site" evidence="4">
    <location>
        <position position="119"/>
    </location>
    <ligand>
        <name>Zn(2+)</name>
        <dbReference type="ChEBI" id="CHEBI:29105"/>
        <label>2</label>
    </ligand>
</feature>
<feature type="sequence conflict" description="In Ref. 1; AAC60260." evidence="7" ref="1">
    <original>G</original>
    <variation>V</variation>
    <location>
        <position position="397"/>
    </location>
</feature>
<feature type="helix" evidence="10">
    <location>
        <begin position="17"/>
        <end position="26"/>
    </location>
</feature>
<feature type="turn" evidence="10">
    <location>
        <begin position="27"/>
        <end position="30"/>
    </location>
</feature>
<feature type="strand" evidence="10">
    <location>
        <begin position="33"/>
        <end position="36"/>
    </location>
</feature>
<feature type="turn" evidence="10">
    <location>
        <begin position="37"/>
        <end position="40"/>
    </location>
</feature>
<feature type="helix" evidence="10">
    <location>
        <begin position="46"/>
        <end position="54"/>
    </location>
</feature>
<feature type="helix" evidence="10">
    <location>
        <begin position="56"/>
        <end position="68"/>
    </location>
</feature>
<feature type="turn" evidence="10">
    <location>
        <begin position="93"/>
        <end position="95"/>
    </location>
</feature>
<feature type="turn" evidence="10">
    <location>
        <begin position="98"/>
        <end position="101"/>
    </location>
</feature>
<feature type="helix" evidence="10">
    <location>
        <begin position="107"/>
        <end position="114"/>
    </location>
</feature>
<feature type="helix" evidence="10">
    <location>
        <begin position="117"/>
        <end position="127"/>
    </location>
</feature>
<dbReference type="EMBL" id="AF005083">
    <property type="protein sequence ID" value="AAC60260.1"/>
    <property type="molecule type" value="mRNA"/>
</dbReference>
<dbReference type="EMBL" id="BC041713">
    <property type="protein sequence ID" value="AAH41713.1"/>
    <property type="molecule type" value="mRNA"/>
</dbReference>
<dbReference type="RefSeq" id="NP_001080778.1">
    <property type="nucleotide sequence ID" value="NM_001087309.1"/>
</dbReference>
<dbReference type="PDB" id="1ZU1">
    <property type="method" value="NMR"/>
    <property type="chains" value="A=2-128"/>
</dbReference>
<dbReference type="PDBsum" id="1ZU1"/>
<dbReference type="SMR" id="Q8AVN9"/>
<dbReference type="DNASU" id="380471"/>
<dbReference type="GeneID" id="380471"/>
<dbReference type="KEGG" id="xla:380471"/>
<dbReference type="AGR" id="Xenbase:XB-GENE-967548"/>
<dbReference type="CTD" id="380471"/>
<dbReference type="Xenbase" id="XB-GENE-967548">
    <property type="gene designation" value="znf346.S"/>
</dbReference>
<dbReference type="OrthoDB" id="1925236at2759"/>
<dbReference type="EvolutionaryTrace" id="Q8AVN9"/>
<dbReference type="Proteomes" id="UP000186698">
    <property type="component" value="Chromosome 3S"/>
</dbReference>
<dbReference type="Bgee" id="380471">
    <property type="expression patterns" value="Expressed in blastula and 19 other cell types or tissues"/>
</dbReference>
<dbReference type="GO" id="GO:0005737">
    <property type="term" value="C:cytoplasm"/>
    <property type="evidence" value="ECO:0007669"/>
    <property type="project" value="UniProtKB-SubCell"/>
</dbReference>
<dbReference type="GO" id="GO:0005634">
    <property type="term" value="C:nucleus"/>
    <property type="evidence" value="ECO:0000314"/>
    <property type="project" value="UniProtKB"/>
</dbReference>
<dbReference type="GO" id="GO:0003725">
    <property type="term" value="F:double-stranded RNA binding"/>
    <property type="evidence" value="ECO:0000314"/>
    <property type="project" value="UniProtKB"/>
</dbReference>
<dbReference type="GO" id="GO:0008270">
    <property type="term" value="F:zinc ion binding"/>
    <property type="evidence" value="ECO:0007669"/>
    <property type="project" value="UniProtKB-KW"/>
</dbReference>
<dbReference type="DisProt" id="DP01733"/>
<dbReference type="FunFam" id="3.30.160.60:FF:002387">
    <property type="entry name" value="Zinc finger protein 346"/>
    <property type="match status" value="4"/>
</dbReference>
<dbReference type="FunFam" id="3.30.160.60:FF:000700">
    <property type="entry name" value="zinc finger protein 346 isoform X1"/>
    <property type="match status" value="1"/>
</dbReference>
<dbReference type="Gene3D" id="3.30.160.60">
    <property type="entry name" value="Classic Zinc Finger"/>
    <property type="match status" value="7"/>
</dbReference>
<dbReference type="InterPro" id="IPR003604">
    <property type="entry name" value="Matrin/U1-like-C_Znf_C2H2"/>
</dbReference>
<dbReference type="InterPro" id="IPR051868">
    <property type="entry name" value="ZN346_ZMAT4"/>
</dbReference>
<dbReference type="InterPro" id="IPR036236">
    <property type="entry name" value="Znf_C2H2_sf"/>
</dbReference>
<dbReference type="InterPro" id="IPR013087">
    <property type="entry name" value="Znf_C2H2_type"/>
</dbReference>
<dbReference type="PANTHER" id="PTHR46144:SF5">
    <property type="entry name" value="ZINC FINGER PROTEIN 346"/>
    <property type="match status" value="1"/>
</dbReference>
<dbReference type="PANTHER" id="PTHR46144">
    <property type="entry name" value="ZINC FINGER PROTEIN 385B-LIKE"/>
    <property type="match status" value="1"/>
</dbReference>
<dbReference type="Pfam" id="PF12874">
    <property type="entry name" value="zf-met"/>
    <property type="match status" value="7"/>
</dbReference>
<dbReference type="SMART" id="SM00355">
    <property type="entry name" value="ZnF_C2H2"/>
    <property type="match status" value="7"/>
</dbReference>
<dbReference type="SMART" id="SM00451">
    <property type="entry name" value="ZnF_U1"/>
    <property type="match status" value="7"/>
</dbReference>
<dbReference type="SUPFAM" id="SSF57667">
    <property type="entry name" value="beta-beta-alpha zinc fingers"/>
    <property type="match status" value="7"/>
</dbReference>
<keyword id="KW-0002">3D-structure</keyword>
<keyword id="KW-0963">Cytoplasm</keyword>
<keyword id="KW-0479">Metal-binding</keyword>
<keyword id="KW-0539">Nucleus</keyword>
<keyword id="KW-1185">Reference proteome</keyword>
<keyword id="KW-0677">Repeat</keyword>
<keyword id="KW-0694">RNA-binding</keyword>
<keyword id="KW-0862">Zinc</keyword>
<keyword id="KW-0863">Zinc-finger</keyword>
<gene>
    <name evidence="1" type="primary">znf346</name>
    <name evidence="9" type="synonym">jaz</name>
</gene>
<comment type="function">
    <text evidence="5">Binds preferentially to dsRNA, but also to RNA-DNA hybrids.</text>
</comment>
<comment type="subcellular location">
    <subcellularLocation>
        <location evidence="5">Nucleus</location>
    </subcellularLocation>
    <subcellularLocation>
        <location evidence="5">Cytoplasm</location>
    </subcellularLocation>
    <text evidence="5">Primarily nuclear.</text>
</comment>
<comment type="domain">
    <text evidence="1">The zinc-finger domains are required for binding to dsRNA, and also for nuclear localization.</text>
</comment>
<reference evidence="7 8" key="1">
    <citation type="journal article" date="1997" name="J. Mol. Biol.">
        <title>A Xenopus zinc finger protein that specifically binds dsRNA and RNA-DNA hybrids.</title>
        <authorList>
            <person name="Finerty P.J. Jr."/>
            <person name="Bass B.L."/>
        </authorList>
    </citation>
    <scope>NUCLEOTIDE SEQUENCE [MRNA]</scope>
    <scope>FUNCTION</scope>
    <scope>SUBCELLULAR LOCATION</scope>
    <source>
        <tissue evidence="5">Head</tissue>
    </source>
</reference>
<reference evidence="9" key="2">
    <citation type="submission" date="2002-12" db="EMBL/GenBank/DDBJ databases">
        <authorList>
            <consortium name="NIH - Xenopus Gene Collection (XGC) project"/>
        </authorList>
    </citation>
    <scope>NUCLEOTIDE SEQUENCE [LARGE SCALE MRNA]</scope>
    <source>
        <tissue evidence="9">Neurula</tissue>
    </source>
</reference>
<reference evidence="7" key="3">
    <citation type="journal article" date="2005" name="J. Mol. Biol.">
        <title>Solution structure of the N-terminal zinc fingers of the Xenopus laevis double-stranded RNA-binding protein ZFa.</title>
        <authorList>
            <person name="Moeller H.M."/>
            <person name="Martinez-Yamout M.A."/>
            <person name="Dyson H.J."/>
            <person name="Wright P.E."/>
        </authorList>
    </citation>
    <scope>STRUCTURE BY NMR OF 2-128 IN COMPLEX WITH ZINC IONS</scope>
</reference>
<evidence type="ECO:0000250" key="1">
    <source>
        <dbReference type="UniProtKB" id="Q9R0B7"/>
    </source>
</evidence>
<evidence type="ECO:0000255" key="2"/>
<evidence type="ECO:0000256" key="3">
    <source>
        <dbReference type="SAM" id="MobiDB-lite"/>
    </source>
</evidence>
<evidence type="ECO:0000269" key="4">
    <source>
    </source>
</evidence>
<evidence type="ECO:0000269" key="5">
    <source>
    </source>
</evidence>
<evidence type="ECO:0000303" key="6">
    <source>
    </source>
</evidence>
<evidence type="ECO:0000305" key="7"/>
<evidence type="ECO:0000312" key="8">
    <source>
        <dbReference type="EMBL" id="AAC60260.1"/>
    </source>
</evidence>
<evidence type="ECO:0000312" key="9">
    <source>
        <dbReference type="EMBL" id="AAH41713.1"/>
    </source>
</evidence>
<evidence type="ECO:0007829" key="10">
    <source>
        <dbReference type="PDB" id="1ZU1"/>
    </source>
</evidence>
<name>ZN346_XENLA</name>